<comment type="function">
    <text evidence="1">Part of the high-affinity ATP-driven potassium transport (or Kdp) system, which catalyzes the hydrolysis of ATP coupled with the electrogenic transport of potassium into the cytoplasm. This subunit acts as a catalytic chaperone that increases the ATP-binding affinity of the ATP-hydrolyzing subunit KdpB by the formation of a transient KdpB/KdpC/ATP ternary complex.</text>
</comment>
<comment type="subunit">
    <text evidence="1">The system is composed of three essential subunits: KdpA, KdpB and KdpC.</text>
</comment>
<comment type="subcellular location">
    <subcellularLocation>
        <location evidence="1">Cell inner membrane</location>
        <topology evidence="1">Single-pass membrane protein</topology>
    </subcellularLocation>
</comment>
<comment type="similarity">
    <text evidence="1">Belongs to the KdpC family.</text>
</comment>
<organism>
    <name type="scientific">Dechloromonas aromatica (strain RCB)</name>
    <dbReference type="NCBI Taxonomy" id="159087"/>
    <lineage>
        <taxon>Bacteria</taxon>
        <taxon>Pseudomonadati</taxon>
        <taxon>Pseudomonadota</taxon>
        <taxon>Betaproteobacteria</taxon>
        <taxon>Rhodocyclales</taxon>
        <taxon>Azonexaceae</taxon>
        <taxon>Dechloromonas</taxon>
    </lineage>
</organism>
<reference key="1">
    <citation type="journal article" date="2009" name="BMC Genomics">
        <title>Metabolic analysis of the soil microbe Dechloromonas aromatica str. RCB: indications of a surprisingly complex life-style and cryptic anaerobic pathways for aromatic degradation.</title>
        <authorList>
            <person name="Salinero K.K."/>
            <person name="Keller K."/>
            <person name="Feil W.S."/>
            <person name="Feil H."/>
            <person name="Trong S."/>
            <person name="Di Bartolo G."/>
            <person name="Lapidus A."/>
        </authorList>
    </citation>
    <scope>NUCLEOTIDE SEQUENCE [LARGE SCALE GENOMIC DNA]</scope>
    <source>
        <strain>RCB</strain>
    </source>
</reference>
<evidence type="ECO:0000255" key="1">
    <source>
        <dbReference type="HAMAP-Rule" id="MF_00276"/>
    </source>
</evidence>
<gene>
    <name evidence="1" type="primary">kdpC</name>
    <name type="ordered locus">Daro_1085</name>
</gene>
<proteinExistence type="inferred from homology"/>
<keyword id="KW-0067">ATP-binding</keyword>
<keyword id="KW-0997">Cell inner membrane</keyword>
<keyword id="KW-1003">Cell membrane</keyword>
<keyword id="KW-0406">Ion transport</keyword>
<keyword id="KW-0472">Membrane</keyword>
<keyword id="KW-0547">Nucleotide-binding</keyword>
<keyword id="KW-0630">Potassium</keyword>
<keyword id="KW-0633">Potassium transport</keyword>
<keyword id="KW-0812">Transmembrane</keyword>
<keyword id="KW-1133">Transmembrane helix</keyword>
<keyword id="KW-0813">Transport</keyword>
<name>KDPC_DECAR</name>
<dbReference type="EMBL" id="CP000089">
    <property type="protein sequence ID" value="AAZ45841.1"/>
    <property type="molecule type" value="Genomic_DNA"/>
</dbReference>
<dbReference type="SMR" id="Q47H40"/>
<dbReference type="STRING" id="159087.Daro_1085"/>
<dbReference type="KEGG" id="dar:Daro_1085"/>
<dbReference type="eggNOG" id="COG2156">
    <property type="taxonomic scope" value="Bacteria"/>
</dbReference>
<dbReference type="HOGENOM" id="CLU_077094_2_0_4"/>
<dbReference type="OrthoDB" id="9788285at2"/>
<dbReference type="GO" id="GO:0005886">
    <property type="term" value="C:plasma membrane"/>
    <property type="evidence" value="ECO:0007669"/>
    <property type="project" value="UniProtKB-SubCell"/>
</dbReference>
<dbReference type="GO" id="GO:0005524">
    <property type="term" value="F:ATP binding"/>
    <property type="evidence" value="ECO:0007669"/>
    <property type="project" value="UniProtKB-UniRule"/>
</dbReference>
<dbReference type="GO" id="GO:0008556">
    <property type="term" value="F:P-type potassium transmembrane transporter activity"/>
    <property type="evidence" value="ECO:0007669"/>
    <property type="project" value="InterPro"/>
</dbReference>
<dbReference type="HAMAP" id="MF_00276">
    <property type="entry name" value="KdpC"/>
    <property type="match status" value="1"/>
</dbReference>
<dbReference type="InterPro" id="IPR003820">
    <property type="entry name" value="KdpC"/>
</dbReference>
<dbReference type="NCBIfam" id="TIGR00681">
    <property type="entry name" value="kdpC"/>
    <property type="match status" value="1"/>
</dbReference>
<dbReference type="NCBIfam" id="NF001454">
    <property type="entry name" value="PRK00315.1"/>
    <property type="match status" value="1"/>
</dbReference>
<dbReference type="PANTHER" id="PTHR30042">
    <property type="entry name" value="POTASSIUM-TRANSPORTING ATPASE C CHAIN"/>
    <property type="match status" value="1"/>
</dbReference>
<dbReference type="PANTHER" id="PTHR30042:SF2">
    <property type="entry name" value="POTASSIUM-TRANSPORTING ATPASE KDPC SUBUNIT"/>
    <property type="match status" value="1"/>
</dbReference>
<dbReference type="Pfam" id="PF02669">
    <property type="entry name" value="KdpC"/>
    <property type="match status" value="1"/>
</dbReference>
<dbReference type="PIRSF" id="PIRSF001296">
    <property type="entry name" value="K_ATPase_KdpC"/>
    <property type="match status" value="1"/>
</dbReference>
<sequence length="191" mass="20036">MKTLLRPAVSLFVLLTAVTGVVYPLAVTGIAKVTFPEAADGSLIVKDGKTVGSSLIGQNFSDPKYFWGRPSATSPMPYNASSSSGSNQGPLNPALVDAVKVRIEALKAADPDNKLPIPADLVNASASGLDPHISPEAAAYQVTRVAGQRHLLPADVKALVSQHTEGRQWGVFGEPRVNVLQLNIALDSVSK</sequence>
<protein>
    <recommendedName>
        <fullName evidence="1">Potassium-transporting ATPase KdpC subunit</fullName>
    </recommendedName>
    <alternativeName>
        <fullName evidence="1">ATP phosphohydrolase [potassium-transporting] C chain</fullName>
    </alternativeName>
    <alternativeName>
        <fullName evidence="1">Potassium-binding and translocating subunit C</fullName>
    </alternativeName>
    <alternativeName>
        <fullName evidence="1">Potassium-translocating ATPase C chain</fullName>
    </alternativeName>
</protein>
<feature type="chain" id="PRO_1000022281" description="Potassium-transporting ATPase KdpC subunit">
    <location>
        <begin position="1"/>
        <end position="191"/>
    </location>
</feature>
<feature type="transmembrane region" description="Helical" evidence="1">
    <location>
        <begin position="11"/>
        <end position="31"/>
    </location>
</feature>
<accession>Q47H40</accession>